<protein>
    <recommendedName>
        <fullName>Eclosion hormone</fullName>
    </recommendedName>
    <alternativeName>
        <fullName>EH</fullName>
    </alternativeName>
    <alternativeName>
        <fullName>Ecdysis activator</fullName>
    </alternativeName>
</protein>
<sequence length="55" mass="5866">CKKMVGAYFEGELCADACLKFKGKMCPTARTSPPSRPSSTSLSSRCCSIKSLCKA</sequence>
<keyword id="KW-0372">Hormone</keyword>
<keyword id="KW-0527">Neuropeptide</keyword>
<keyword id="KW-0964">Secreted</keyword>
<dbReference type="EMBL" id="AF138854">
    <property type="protein sequence ID" value="AAD28480.1"/>
    <property type="molecule type" value="mRNA"/>
</dbReference>
<dbReference type="GO" id="GO:0005576">
    <property type="term" value="C:extracellular region"/>
    <property type="evidence" value="ECO:0007669"/>
    <property type="project" value="UniProtKB-SubCell"/>
</dbReference>
<dbReference type="GO" id="GO:0008255">
    <property type="term" value="F:ecdysis-triggering hormone activity"/>
    <property type="evidence" value="ECO:0007669"/>
    <property type="project" value="InterPro"/>
</dbReference>
<dbReference type="GO" id="GO:0018990">
    <property type="term" value="P:ecdysis, chitin-based cuticle"/>
    <property type="evidence" value="ECO:0007669"/>
    <property type="project" value="InterPro"/>
</dbReference>
<dbReference type="GO" id="GO:0007218">
    <property type="term" value="P:neuropeptide signaling pathway"/>
    <property type="evidence" value="ECO:0007669"/>
    <property type="project" value="UniProtKB-KW"/>
</dbReference>
<dbReference type="InterPro" id="IPR006825">
    <property type="entry name" value="Eclosion"/>
</dbReference>
<dbReference type="Pfam" id="PF04736">
    <property type="entry name" value="Eclosion"/>
    <property type="match status" value="1"/>
</dbReference>
<feature type="chain" id="PRO_0000086911" description="Eclosion hormone">
    <location>
        <begin position="1" status="less than"/>
        <end position="55" status="greater than"/>
    </location>
</feature>
<feature type="non-terminal residue">
    <location>
        <position position="1"/>
    </location>
</feature>
<feature type="non-terminal residue">
    <location>
        <position position="55"/>
    </location>
</feature>
<organism>
    <name type="scientific">Romalea microptera</name>
    <name type="common">Eastern lubber grasshopper</name>
    <name type="synonym">Romalea guttata</name>
    <dbReference type="NCBI Taxonomy" id="7007"/>
    <lineage>
        <taxon>Eukaryota</taxon>
        <taxon>Metazoa</taxon>
        <taxon>Ecdysozoa</taxon>
        <taxon>Arthropoda</taxon>
        <taxon>Hexapoda</taxon>
        <taxon>Insecta</taxon>
        <taxon>Pterygota</taxon>
        <taxon>Neoptera</taxon>
        <taxon>Polyneoptera</taxon>
        <taxon>Orthoptera</taxon>
        <taxon>Caelifera</taxon>
        <taxon>Acrididea</taxon>
        <taxon>Acridomorpha</taxon>
        <taxon>Acridoidea</taxon>
        <taxon>Romaleidae</taxon>
        <taxon>Romaleinae</taxon>
        <taxon>Romalea</taxon>
    </lineage>
</organism>
<accession>Q9XZE6</accession>
<name>ECLH_ROMMI</name>
<evidence type="ECO:0000250" key="1"/>
<evidence type="ECO:0000305" key="2"/>
<reference key="1">
    <citation type="submission" date="1999-03" db="EMBL/GenBank/DDBJ databases">
        <title>Partial sequence of eclosion hormone of Romalea guttata.</title>
        <authorList>
            <person name="Borst D.W."/>
            <person name="Mutun S."/>
            <person name="Holford K.C."/>
        </authorList>
    </citation>
    <scope>NUCLEOTIDE SEQUENCE [MRNA]</scope>
</reference>
<comment type="function">
    <text evidence="1">Neuropeptide that triggers the performance of ecdysis behaviors at the end of a molt. It triggers adult behavior patterns: larval, pupal and adult ecdysis, and plasticization during the molt (By similarity).</text>
</comment>
<comment type="subcellular location">
    <subcellularLocation>
        <location evidence="1">Secreted</location>
    </subcellularLocation>
</comment>
<comment type="similarity">
    <text evidence="2">Belongs to the insect eclosion hormone family.</text>
</comment>
<proteinExistence type="evidence at transcript level"/>